<feature type="chain" id="PRO_1000053755" description="Uracil phosphoribosyltransferase">
    <location>
        <begin position="1"/>
        <end position="208"/>
    </location>
</feature>
<feature type="binding site" evidence="1">
    <location>
        <position position="78"/>
    </location>
    <ligand>
        <name>5-phospho-alpha-D-ribose 1-diphosphate</name>
        <dbReference type="ChEBI" id="CHEBI:58017"/>
    </ligand>
</feature>
<feature type="binding site" evidence="1">
    <location>
        <position position="103"/>
    </location>
    <ligand>
        <name>5-phospho-alpha-D-ribose 1-diphosphate</name>
        <dbReference type="ChEBI" id="CHEBI:58017"/>
    </ligand>
</feature>
<feature type="binding site" evidence="1">
    <location>
        <begin position="130"/>
        <end position="138"/>
    </location>
    <ligand>
        <name>5-phospho-alpha-D-ribose 1-diphosphate</name>
        <dbReference type="ChEBI" id="CHEBI:58017"/>
    </ligand>
</feature>
<feature type="binding site" evidence="1">
    <location>
        <position position="193"/>
    </location>
    <ligand>
        <name>uracil</name>
        <dbReference type="ChEBI" id="CHEBI:17568"/>
    </ligand>
</feature>
<feature type="binding site" evidence="1">
    <location>
        <begin position="198"/>
        <end position="200"/>
    </location>
    <ligand>
        <name>uracil</name>
        <dbReference type="ChEBI" id="CHEBI:17568"/>
    </ligand>
</feature>
<feature type="binding site" evidence="1">
    <location>
        <position position="199"/>
    </location>
    <ligand>
        <name>5-phospho-alpha-D-ribose 1-diphosphate</name>
        <dbReference type="ChEBI" id="CHEBI:58017"/>
    </ligand>
</feature>
<accession>A1AMK6</accession>
<gene>
    <name evidence="1" type="primary">upp</name>
    <name type="ordered locus">Ppro_0947</name>
</gene>
<dbReference type="EC" id="2.4.2.9" evidence="1"/>
<dbReference type="EMBL" id="CP000482">
    <property type="protein sequence ID" value="ABK98576.1"/>
    <property type="molecule type" value="Genomic_DNA"/>
</dbReference>
<dbReference type="RefSeq" id="WP_011734883.1">
    <property type="nucleotide sequence ID" value="NC_008609.1"/>
</dbReference>
<dbReference type="SMR" id="A1AMK6"/>
<dbReference type="STRING" id="338966.Ppro_0947"/>
<dbReference type="KEGG" id="ppd:Ppro_0947"/>
<dbReference type="eggNOG" id="COG0035">
    <property type="taxonomic scope" value="Bacteria"/>
</dbReference>
<dbReference type="HOGENOM" id="CLU_067096_2_2_7"/>
<dbReference type="OrthoDB" id="9781675at2"/>
<dbReference type="UniPathway" id="UPA00574">
    <property type="reaction ID" value="UER00636"/>
</dbReference>
<dbReference type="Proteomes" id="UP000006732">
    <property type="component" value="Chromosome"/>
</dbReference>
<dbReference type="GO" id="GO:0005525">
    <property type="term" value="F:GTP binding"/>
    <property type="evidence" value="ECO:0007669"/>
    <property type="project" value="UniProtKB-KW"/>
</dbReference>
<dbReference type="GO" id="GO:0000287">
    <property type="term" value="F:magnesium ion binding"/>
    <property type="evidence" value="ECO:0007669"/>
    <property type="project" value="UniProtKB-UniRule"/>
</dbReference>
<dbReference type="GO" id="GO:0004845">
    <property type="term" value="F:uracil phosphoribosyltransferase activity"/>
    <property type="evidence" value="ECO:0007669"/>
    <property type="project" value="UniProtKB-UniRule"/>
</dbReference>
<dbReference type="GO" id="GO:0044206">
    <property type="term" value="P:UMP salvage"/>
    <property type="evidence" value="ECO:0007669"/>
    <property type="project" value="UniProtKB-UniRule"/>
</dbReference>
<dbReference type="GO" id="GO:0006223">
    <property type="term" value="P:uracil salvage"/>
    <property type="evidence" value="ECO:0007669"/>
    <property type="project" value="InterPro"/>
</dbReference>
<dbReference type="CDD" id="cd06223">
    <property type="entry name" value="PRTases_typeI"/>
    <property type="match status" value="1"/>
</dbReference>
<dbReference type="FunFam" id="3.40.50.2020:FF:000003">
    <property type="entry name" value="Uracil phosphoribosyltransferase"/>
    <property type="match status" value="1"/>
</dbReference>
<dbReference type="Gene3D" id="3.40.50.2020">
    <property type="match status" value="1"/>
</dbReference>
<dbReference type="HAMAP" id="MF_01218_B">
    <property type="entry name" value="Upp_B"/>
    <property type="match status" value="1"/>
</dbReference>
<dbReference type="InterPro" id="IPR000836">
    <property type="entry name" value="PRibTrfase_dom"/>
</dbReference>
<dbReference type="InterPro" id="IPR029057">
    <property type="entry name" value="PRTase-like"/>
</dbReference>
<dbReference type="InterPro" id="IPR034332">
    <property type="entry name" value="Upp_B"/>
</dbReference>
<dbReference type="InterPro" id="IPR050054">
    <property type="entry name" value="UPRTase/APRTase"/>
</dbReference>
<dbReference type="InterPro" id="IPR005765">
    <property type="entry name" value="Ura_phspho_trans"/>
</dbReference>
<dbReference type="NCBIfam" id="NF001097">
    <property type="entry name" value="PRK00129.1"/>
    <property type="match status" value="1"/>
</dbReference>
<dbReference type="NCBIfam" id="TIGR01091">
    <property type="entry name" value="upp"/>
    <property type="match status" value="1"/>
</dbReference>
<dbReference type="PANTHER" id="PTHR32315">
    <property type="entry name" value="ADENINE PHOSPHORIBOSYLTRANSFERASE"/>
    <property type="match status" value="1"/>
</dbReference>
<dbReference type="PANTHER" id="PTHR32315:SF4">
    <property type="entry name" value="URACIL PHOSPHORIBOSYLTRANSFERASE, CHLOROPLASTIC"/>
    <property type="match status" value="1"/>
</dbReference>
<dbReference type="Pfam" id="PF14681">
    <property type="entry name" value="UPRTase"/>
    <property type="match status" value="1"/>
</dbReference>
<dbReference type="SUPFAM" id="SSF53271">
    <property type="entry name" value="PRTase-like"/>
    <property type="match status" value="1"/>
</dbReference>
<protein>
    <recommendedName>
        <fullName evidence="1">Uracil phosphoribosyltransferase</fullName>
        <ecNumber evidence="1">2.4.2.9</ecNumber>
    </recommendedName>
    <alternativeName>
        <fullName evidence="1">UMP pyrophosphorylase</fullName>
    </alternativeName>
    <alternativeName>
        <fullName evidence="1">UPRTase</fullName>
    </alternativeName>
</protein>
<sequence length="208" mass="22871">MAIFEVKHPLIQHKLGLMRKADQSTKQFRELASEVARLLTYEATKDLETESITITGWAGPVTVQQIKGKKITVVPILRAGLGMMNGVLDMIPSAKVSVVGLYRNEETLEPVAYYEKFASGMEERIALIIDPMLATGGSLLTTIEMLKKTGCRRIKGLFLVAVPEGLERIGRAHPDVEIYVASIDERLNEQGYILPGLGDAGDKIFGTK</sequence>
<proteinExistence type="inferred from homology"/>
<evidence type="ECO:0000255" key="1">
    <source>
        <dbReference type="HAMAP-Rule" id="MF_01218"/>
    </source>
</evidence>
<organism>
    <name type="scientific">Pelobacter propionicus (strain DSM 2379 / NBRC 103807 / OttBd1)</name>
    <dbReference type="NCBI Taxonomy" id="338966"/>
    <lineage>
        <taxon>Bacteria</taxon>
        <taxon>Pseudomonadati</taxon>
        <taxon>Thermodesulfobacteriota</taxon>
        <taxon>Desulfuromonadia</taxon>
        <taxon>Desulfuromonadales</taxon>
        <taxon>Desulfuromonadaceae</taxon>
        <taxon>Pelobacter</taxon>
    </lineage>
</organism>
<name>UPP_PELPD</name>
<keyword id="KW-0021">Allosteric enzyme</keyword>
<keyword id="KW-0328">Glycosyltransferase</keyword>
<keyword id="KW-0342">GTP-binding</keyword>
<keyword id="KW-0460">Magnesium</keyword>
<keyword id="KW-0547">Nucleotide-binding</keyword>
<keyword id="KW-1185">Reference proteome</keyword>
<keyword id="KW-0808">Transferase</keyword>
<reference key="1">
    <citation type="submission" date="2006-10" db="EMBL/GenBank/DDBJ databases">
        <title>Complete sequence of chromosome of Pelobacter propionicus DSM 2379.</title>
        <authorList>
            <consortium name="US DOE Joint Genome Institute"/>
            <person name="Copeland A."/>
            <person name="Lucas S."/>
            <person name="Lapidus A."/>
            <person name="Barry K."/>
            <person name="Detter J.C."/>
            <person name="Glavina del Rio T."/>
            <person name="Hammon N."/>
            <person name="Israni S."/>
            <person name="Dalin E."/>
            <person name="Tice H."/>
            <person name="Pitluck S."/>
            <person name="Saunders E."/>
            <person name="Brettin T."/>
            <person name="Bruce D."/>
            <person name="Han C."/>
            <person name="Tapia R."/>
            <person name="Schmutz J."/>
            <person name="Larimer F."/>
            <person name="Land M."/>
            <person name="Hauser L."/>
            <person name="Kyrpides N."/>
            <person name="Kim E."/>
            <person name="Lovley D."/>
            <person name="Richardson P."/>
        </authorList>
    </citation>
    <scope>NUCLEOTIDE SEQUENCE [LARGE SCALE GENOMIC DNA]</scope>
    <source>
        <strain>DSM 2379 / NBRC 103807 / OttBd1</strain>
    </source>
</reference>
<comment type="function">
    <text evidence="1">Catalyzes the conversion of uracil and 5-phospho-alpha-D-ribose 1-diphosphate (PRPP) to UMP and diphosphate.</text>
</comment>
<comment type="catalytic activity">
    <reaction evidence="1">
        <text>UMP + diphosphate = 5-phospho-alpha-D-ribose 1-diphosphate + uracil</text>
        <dbReference type="Rhea" id="RHEA:13017"/>
        <dbReference type="ChEBI" id="CHEBI:17568"/>
        <dbReference type="ChEBI" id="CHEBI:33019"/>
        <dbReference type="ChEBI" id="CHEBI:57865"/>
        <dbReference type="ChEBI" id="CHEBI:58017"/>
        <dbReference type="EC" id="2.4.2.9"/>
    </reaction>
</comment>
<comment type="cofactor">
    <cofactor evidence="1">
        <name>Mg(2+)</name>
        <dbReference type="ChEBI" id="CHEBI:18420"/>
    </cofactor>
    <text evidence="1">Binds 1 Mg(2+) ion per subunit. The magnesium is bound as Mg-PRPP.</text>
</comment>
<comment type="activity regulation">
    <text evidence="1">Allosterically activated by GTP.</text>
</comment>
<comment type="pathway">
    <text evidence="1">Pyrimidine metabolism; UMP biosynthesis via salvage pathway; UMP from uracil: step 1/1.</text>
</comment>
<comment type="similarity">
    <text evidence="1">Belongs to the UPRTase family.</text>
</comment>